<keyword id="KW-0963">Cytoplasm</keyword>
<keyword id="KW-0251">Elongation factor</keyword>
<keyword id="KW-0648">Protein biosynthesis</keyword>
<name>EFTS_WOLPP</name>
<proteinExistence type="inferred from homology"/>
<accession>B3CNH0</accession>
<gene>
    <name evidence="1" type="primary">tsf</name>
    <name type="ordered locus">WP1244</name>
</gene>
<sequence length="281" mass="30928">MKMDSSSIRELRDRTGLGLSDCKKALEECDGDIKKAVDRLRTIGFAKADKKSDRVASDGLIAMCLAKNYGVLVKVNCETDFVARNEKFIALVSNLASIACQERCTSLDELKNAKYEDVGTVQEAIISGTSVLGEKLELSNLCYLETKDGIIAGYVHGDMHGLGKIGALVALQSSGDKQEIGKQIAMHVVAMKPEALSIDDLDQEKLNNERSIIEEQVKSLNKPEEVAKKIVDGRMAKYYEEVVLLEQKFIKDDKMKIADFIESSAVKLANYKLLTLDGANK</sequence>
<evidence type="ECO:0000255" key="1">
    <source>
        <dbReference type="HAMAP-Rule" id="MF_00050"/>
    </source>
</evidence>
<reference key="1">
    <citation type="journal article" date="2008" name="Mol. Biol. Evol.">
        <title>Genome evolution of Wolbachia strain wPip from the Culex pipiens group.</title>
        <authorList>
            <person name="Klasson L."/>
            <person name="Walker T."/>
            <person name="Sebaihia M."/>
            <person name="Sanders M.J."/>
            <person name="Quail M.A."/>
            <person name="Lord A."/>
            <person name="Sanders S."/>
            <person name="Earl J."/>
            <person name="O'Neill S.L."/>
            <person name="Thomson N."/>
            <person name="Sinkins S.P."/>
            <person name="Parkhill J."/>
        </authorList>
    </citation>
    <scope>NUCLEOTIDE SEQUENCE [LARGE SCALE GENOMIC DNA]</scope>
    <source>
        <strain>wPip</strain>
    </source>
</reference>
<protein>
    <recommendedName>
        <fullName evidence="1">Elongation factor Ts</fullName>
        <shortName evidence="1">EF-Ts</shortName>
    </recommendedName>
</protein>
<dbReference type="EMBL" id="AM999887">
    <property type="protein sequence ID" value="CAQ55352.1"/>
    <property type="molecule type" value="Genomic_DNA"/>
</dbReference>
<dbReference type="RefSeq" id="WP_007302599.1">
    <property type="nucleotide sequence ID" value="NC_010981.1"/>
</dbReference>
<dbReference type="SMR" id="B3CNH0"/>
<dbReference type="KEGG" id="wpi:WP1244"/>
<dbReference type="eggNOG" id="COG0264">
    <property type="taxonomic scope" value="Bacteria"/>
</dbReference>
<dbReference type="HOGENOM" id="CLU_047155_0_2_5"/>
<dbReference type="Proteomes" id="UP000008814">
    <property type="component" value="Chromosome"/>
</dbReference>
<dbReference type="GO" id="GO:0005737">
    <property type="term" value="C:cytoplasm"/>
    <property type="evidence" value="ECO:0007669"/>
    <property type="project" value="UniProtKB-SubCell"/>
</dbReference>
<dbReference type="GO" id="GO:0003746">
    <property type="term" value="F:translation elongation factor activity"/>
    <property type="evidence" value="ECO:0007669"/>
    <property type="project" value="UniProtKB-UniRule"/>
</dbReference>
<dbReference type="CDD" id="cd14275">
    <property type="entry name" value="UBA_EF-Ts"/>
    <property type="match status" value="1"/>
</dbReference>
<dbReference type="FunFam" id="1.10.286.20:FF:000001">
    <property type="entry name" value="Elongation factor Ts"/>
    <property type="match status" value="1"/>
</dbReference>
<dbReference type="FunFam" id="1.10.8.10:FF:000001">
    <property type="entry name" value="Elongation factor Ts"/>
    <property type="match status" value="1"/>
</dbReference>
<dbReference type="Gene3D" id="1.10.286.20">
    <property type="match status" value="1"/>
</dbReference>
<dbReference type="Gene3D" id="1.10.8.10">
    <property type="entry name" value="DNA helicase RuvA subunit, C-terminal domain"/>
    <property type="match status" value="1"/>
</dbReference>
<dbReference type="Gene3D" id="3.30.479.20">
    <property type="entry name" value="Elongation factor Ts, dimerisation domain"/>
    <property type="match status" value="2"/>
</dbReference>
<dbReference type="HAMAP" id="MF_00050">
    <property type="entry name" value="EF_Ts"/>
    <property type="match status" value="1"/>
</dbReference>
<dbReference type="InterPro" id="IPR036402">
    <property type="entry name" value="EF-Ts_dimer_sf"/>
</dbReference>
<dbReference type="InterPro" id="IPR001816">
    <property type="entry name" value="Transl_elong_EFTs/EF1B"/>
</dbReference>
<dbReference type="InterPro" id="IPR014039">
    <property type="entry name" value="Transl_elong_EFTs/EF1B_dimer"/>
</dbReference>
<dbReference type="InterPro" id="IPR018101">
    <property type="entry name" value="Transl_elong_Ts_CS"/>
</dbReference>
<dbReference type="InterPro" id="IPR009060">
    <property type="entry name" value="UBA-like_sf"/>
</dbReference>
<dbReference type="NCBIfam" id="TIGR00116">
    <property type="entry name" value="tsf"/>
    <property type="match status" value="1"/>
</dbReference>
<dbReference type="PANTHER" id="PTHR11741">
    <property type="entry name" value="ELONGATION FACTOR TS"/>
    <property type="match status" value="1"/>
</dbReference>
<dbReference type="PANTHER" id="PTHR11741:SF0">
    <property type="entry name" value="ELONGATION FACTOR TS, MITOCHONDRIAL"/>
    <property type="match status" value="1"/>
</dbReference>
<dbReference type="Pfam" id="PF00889">
    <property type="entry name" value="EF_TS"/>
    <property type="match status" value="1"/>
</dbReference>
<dbReference type="SUPFAM" id="SSF54713">
    <property type="entry name" value="Elongation factor Ts (EF-Ts), dimerisation domain"/>
    <property type="match status" value="2"/>
</dbReference>
<dbReference type="SUPFAM" id="SSF46934">
    <property type="entry name" value="UBA-like"/>
    <property type="match status" value="1"/>
</dbReference>
<dbReference type="PROSITE" id="PS01126">
    <property type="entry name" value="EF_TS_1"/>
    <property type="match status" value="1"/>
</dbReference>
<organism>
    <name type="scientific">Wolbachia pipientis subsp. Culex pipiens (strain wPip)</name>
    <dbReference type="NCBI Taxonomy" id="570417"/>
    <lineage>
        <taxon>Bacteria</taxon>
        <taxon>Pseudomonadati</taxon>
        <taxon>Pseudomonadota</taxon>
        <taxon>Alphaproteobacteria</taxon>
        <taxon>Rickettsiales</taxon>
        <taxon>Anaplasmataceae</taxon>
        <taxon>Wolbachieae</taxon>
        <taxon>Wolbachia</taxon>
    </lineage>
</organism>
<feature type="chain" id="PRO_1000189903" description="Elongation factor Ts">
    <location>
        <begin position="1"/>
        <end position="281"/>
    </location>
</feature>
<feature type="region of interest" description="Involved in Mg(2+) ion dislocation from EF-Tu" evidence="1">
    <location>
        <begin position="79"/>
        <end position="82"/>
    </location>
</feature>
<comment type="function">
    <text evidence="1">Associates with the EF-Tu.GDP complex and induces the exchange of GDP to GTP. It remains bound to the aminoacyl-tRNA.EF-Tu.GTP complex up to the GTP hydrolysis stage on the ribosome.</text>
</comment>
<comment type="subcellular location">
    <subcellularLocation>
        <location evidence="1">Cytoplasm</location>
    </subcellularLocation>
</comment>
<comment type="similarity">
    <text evidence="1">Belongs to the EF-Ts family.</text>
</comment>